<accession>Q49768</accession>
<keyword id="KW-0134">Cell wall</keyword>
<keyword id="KW-0342">GTP-binding</keyword>
<keyword id="KW-0547">Nucleotide-binding</keyword>
<keyword id="KW-1185">Reference proteome</keyword>
<keyword id="KW-0694">RNA-binding</keyword>
<keyword id="KW-0964">Secreted</keyword>
<organism>
    <name type="scientific">Mycobacterium leprae (strain TN)</name>
    <dbReference type="NCBI Taxonomy" id="272631"/>
    <lineage>
        <taxon>Bacteria</taxon>
        <taxon>Bacillati</taxon>
        <taxon>Actinomycetota</taxon>
        <taxon>Actinomycetes</taxon>
        <taxon>Mycobacteriales</taxon>
        <taxon>Mycobacteriaceae</taxon>
        <taxon>Mycobacterium</taxon>
    </lineage>
</organism>
<sequence length="300" mass="32589">MAEFRSGFVCLIGRPNTGKSTLTNALVGTKVAITSMKPQTTRHTIRGIVHREGNFQIVLVDTPGLHRPRTLLGKRLNDLVRDTYTEVDLIGLCIPADEATGPGDRWIVNQIRSVAPKTILVVIVTKIDKVPKDRLSAQLVAVSDLVADSAEIVPVSAVTGEQVDVLIDVLAAALPPGPAYYSAGELTDEPEELLMAELIREAVLEGVHDELPHSLAVVIDEVSPRAGRGDLIDVHAVLYVERPSQKGIVIGKSGARLREVGIAARRQIEKLLGTNIYLDLHVNVAKNWQRNPKQLGRLGF</sequence>
<reference key="1">
    <citation type="submission" date="1994-03" db="EMBL/GenBank/DDBJ databases">
        <authorList>
            <person name="Smith D.R."/>
            <person name="Robison K."/>
        </authorList>
    </citation>
    <scope>NUCLEOTIDE SEQUENCE [GENOMIC DNA]</scope>
</reference>
<reference key="2">
    <citation type="journal article" date="2001" name="Nature">
        <title>Massive gene decay in the leprosy bacillus.</title>
        <authorList>
            <person name="Cole S.T."/>
            <person name="Eiglmeier K."/>
            <person name="Parkhill J."/>
            <person name="James K.D."/>
            <person name="Thomson N.R."/>
            <person name="Wheeler P.R."/>
            <person name="Honore N."/>
            <person name="Garnier T."/>
            <person name="Churcher C.M."/>
            <person name="Harris D.E."/>
            <person name="Mungall K.L."/>
            <person name="Basham D."/>
            <person name="Brown D."/>
            <person name="Chillingworth T."/>
            <person name="Connor R."/>
            <person name="Davies R.M."/>
            <person name="Devlin K."/>
            <person name="Duthoy S."/>
            <person name="Feltwell T."/>
            <person name="Fraser A."/>
            <person name="Hamlin N."/>
            <person name="Holroyd S."/>
            <person name="Hornsby T."/>
            <person name="Jagels K."/>
            <person name="Lacroix C."/>
            <person name="Maclean J."/>
            <person name="Moule S."/>
            <person name="Murphy L.D."/>
            <person name="Oliver K."/>
            <person name="Quail M.A."/>
            <person name="Rajandream M.A."/>
            <person name="Rutherford K.M."/>
            <person name="Rutter S."/>
            <person name="Seeger K."/>
            <person name="Simon S."/>
            <person name="Simmonds M."/>
            <person name="Skelton J."/>
            <person name="Squares R."/>
            <person name="Squares S."/>
            <person name="Stevens K."/>
            <person name="Taylor K."/>
            <person name="Whitehead S."/>
            <person name="Woodward J.R."/>
            <person name="Barrell B.G."/>
        </authorList>
    </citation>
    <scope>NUCLEOTIDE SEQUENCE [LARGE SCALE GENOMIC DNA]</scope>
    <source>
        <strain>TN</strain>
    </source>
</reference>
<evidence type="ECO:0000255" key="1">
    <source>
        <dbReference type="HAMAP-Rule" id="MF_00367"/>
    </source>
</evidence>
<evidence type="ECO:0000255" key="2">
    <source>
        <dbReference type="PROSITE-ProRule" id="PRU01050"/>
    </source>
</evidence>
<evidence type="ECO:0000305" key="3"/>
<name>ERA_MYCLE</name>
<proteinExistence type="inferred from homology"/>
<gene>
    <name evidence="1" type="primary">era</name>
    <name type="ordered locus">ML0631</name>
    <name type="ORF">B1937_F3_102</name>
</gene>
<comment type="function">
    <text evidence="1">Exhibits GTPase activity. Binds RNA but is probably not involved in ribosome assembly in mycobacteria.</text>
</comment>
<comment type="subunit">
    <text evidence="1">Monomer.</text>
</comment>
<comment type="subcellular location">
    <subcellularLocation>
        <location evidence="1">Cell envelope</location>
    </subcellularLocation>
    <subcellularLocation>
        <location evidence="1">Secreted</location>
        <location evidence="1">Cell wall</location>
    </subcellularLocation>
</comment>
<comment type="similarity">
    <text evidence="1">Belongs to the TRAFAC class TrmE-Era-EngA-EngB-Septin-like GTPase superfamily. Era GTPase family.</text>
</comment>
<comment type="sequence caution" evidence="3">
    <conflict type="erroneous initiation">
        <sequence resource="EMBL-CDS" id="AAA17174"/>
    </conflict>
    <text>Extended N-terminus.</text>
</comment>
<comment type="sequence caution" evidence="3">
    <conflict type="erroneous initiation">
        <sequence resource="EMBL-CDS" id="CAC30139"/>
    </conflict>
    <text>Extended N-terminus.</text>
</comment>
<protein>
    <recommendedName>
        <fullName evidence="1">GTPase Era</fullName>
    </recommendedName>
</protein>
<dbReference type="EMBL" id="U00016">
    <property type="protein sequence ID" value="AAA17174.1"/>
    <property type="status" value="ALT_INIT"/>
    <property type="molecule type" value="Genomic_DNA"/>
</dbReference>
<dbReference type="EMBL" id="AL583919">
    <property type="protein sequence ID" value="CAC30139.1"/>
    <property type="status" value="ALT_INIT"/>
    <property type="molecule type" value="Genomic_DNA"/>
</dbReference>
<dbReference type="PIR" id="S72606">
    <property type="entry name" value="S72606"/>
</dbReference>
<dbReference type="RefSeq" id="WP_041323703.1">
    <property type="nucleotide sequence ID" value="NC_002677.1"/>
</dbReference>
<dbReference type="SMR" id="Q49768"/>
<dbReference type="STRING" id="272631.gene:17574452"/>
<dbReference type="KEGG" id="mle:ML0631"/>
<dbReference type="Leproma" id="ML0631"/>
<dbReference type="eggNOG" id="COG1159">
    <property type="taxonomic scope" value="Bacteria"/>
</dbReference>
<dbReference type="HOGENOM" id="CLU_038009_0_2_11"/>
<dbReference type="Proteomes" id="UP000000806">
    <property type="component" value="Chromosome"/>
</dbReference>
<dbReference type="GO" id="GO:0030313">
    <property type="term" value="C:cell envelope"/>
    <property type="evidence" value="ECO:0007669"/>
    <property type="project" value="UniProtKB-SubCell"/>
</dbReference>
<dbReference type="GO" id="GO:0005829">
    <property type="term" value="C:cytosol"/>
    <property type="evidence" value="ECO:0007669"/>
    <property type="project" value="TreeGrafter"/>
</dbReference>
<dbReference type="GO" id="GO:0005576">
    <property type="term" value="C:extracellular region"/>
    <property type="evidence" value="ECO:0007669"/>
    <property type="project" value="UniProtKB-KW"/>
</dbReference>
<dbReference type="GO" id="GO:0005525">
    <property type="term" value="F:GTP binding"/>
    <property type="evidence" value="ECO:0007669"/>
    <property type="project" value="UniProtKB-UniRule"/>
</dbReference>
<dbReference type="GO" id="GO:0003924">
    <property type="term" value="F:GTPase activity"/>
    <property type="evidence" value="ECO:0007669"/>
    <property type="project" value="UniProtKB-UniRule"/>
</dbReference>
<dbReference type="GO" id="GO:0043024">
    <property type="term" value="F:ribosomal small subunit binding"/>
    <property type="evidence" value="ECO:0007669"/>
    <property type="project" value="TreeGrafter"/>
</dbReference>
<dbReference type="GO" id="GO:0019843">
    <property type="term" value="F:rRNA binding"/>
    <property type="evidence" value="ECO:0007669"/>
    <property type="project" value="TreeGrafter"/>
</dbReference>
<dbReference type="GO" id="GO:0000028">
    <property type="term" value="P:ribosomal small subunit assembly"/>
    <property type="evidence" value="ECO:0007669"/>
    <property type="project" value="TreeGrafter"/>
</dbReference>
<dbReference type="CDD" id="cd04163">
    <property type="entry name" value="Era"/>
    <property type="match status" value="1"/>
</dbReference>
<dbReference type="CDD" id="cd22534">
    <property type="entry name" value="KH-II_Era"/>
    <property type="match status" value="1"/>
</dbReference>
<dbReference type="FunFam" id="3.30.300.20:FF:000003">
    <property type="entry name" value="GTPase Era"/>
    <property type="match status" value="1"/>
</dbReference>
<dbReference type="Gene3D" id="3.30.300.20">
    <property type="match status" value="1"/>
</dbReference>
<dbReference type="Gene3D" id="3.40.50.300">
    <property type="entry name" value="P-loop containing nucleotide triphosphate hydrolases"/>
    <property type="match status" value="1"/>
</dbReference>
<dbReference type="HAMAP" id="MF_00367">
    <property type="entry name" value="GTPase_Era"/>
    <property type="match status" value="1"/>
</dbReference>
<dbReference type="InterPro" id="IPR030388">
    <property type="entry name" value="G_ERA_dom"/>
</dbReference>
<dbReference type="InterPro" id="IPR006073">
    <property type="entry name" value="GTP-bd"/>
</dbReference>
<dbReference type="InterPro" id="IPR005662">
    <property type="entry name" value="GTPase_Era-like"/>
</dbReference>
<dbReference type="InterPro" id="IPR015946">
    <property type="entry name" value="KH_dom-like_a/b"/>
</dbReference>
<dbReference type="InterPro" id="IPR004044">
    <property type="entry name" value="KH_dom_type_2"/>
</dbReference>
<dbReference type="InterPro" id="IPR009019">
    <property type="entry name" value="KH_sf_prok-type"/>
</dbReference>
<dbReference type="InterPro" id="IPR027417">
    <property type="entry name" value="P-loop_NTPase"/>
</dbReference>
<dbReference type="InterPro" id="IPR005225">
    <property type="entry name" value="Small_GTP-bd"/>
</dbReference>
<dbReference type="NCBIfam" id="TIGR00436">
    <property type="entry name" value="era"/>
    <property type="match status" value="1"/>
</dbReference>
<dbReference type="NCBIfam" id="NF000908">
    <property type="entry name" value="PRK00089.1"/>
    <property type="match status" value="1"/>
</dbReference>
<dbReference type="NCBIfam" id="TIGR00231">
    <property type="entry name" value="small_GTP"/>
    <property type="match status" value="1"/>
</dbReference>
<dbReference type="PANTHER" id="PTHR42698">
    <property type="entry name" value="GTPASE ERA"/>
    <property type="match status" value="1"/>
</dbReference>
<dbReference type="PANTHER" id="PTHR42698:SF1">
    <property type="entry name" value="GTPASE ERA, MITOCHONDRIAL"/>
    <property type="match status" value="1"/>
</dbReference>
<dbReference type="Pfam" id="PF07650">
    <property type="entry name" value="KH_2"/>
    <property type="match status" value="1"/>
</dbReference>
<dbReference type="Pfam" id="PF01926">
    <property type="entry name" value="MMR_HSR1"/>
    <property type="match status" value="1"/>
</dbReference>
<dbReference type="PRINTS" id="PR00326">
    <property type="entry name" value="GTP1OBG"/>
</dbReference>
<dbReference type="SUPFAM" id="SSF52540">
    <property type="entry name" value="P-loop containing nucleoside triphosphate hydrolases"/>
    <property type="match status" value="1"/>
</dbReference>
<dbReference type="SUPFAM" id="SSF54814">
    <property type="entry name" value="Prokaryotic type KH domain (KH-domain type II)"/>
    <property type="match status" value="1"/>
</dbReference>
<dbReference type="PROSITE" id="PS51713">
    <property type="entry name" value="G_ERA"/>
    <property type="match status" value="1"/>
</dbReference>
<dbReference type="PROSITE" id="PS50823">
    <property type="entry name" value="KH_TYPE_2"/>
    <property type="match status" value="1"/>
</dbReference>
<feature type="chain" id="PRO_0000180030" description="GTPase Era">
    <location>
        <begin position="1"/>
        <end position="300"/>
    </location>
</feature>
<feature type="domain" description="Era-type G" evidence="2">
    <location>
        <begin position="5"/>
        <end position="176"/>
    </location>
</feature>
<feature type="domain" description="KH type-2" evidence="1">
    <location>
        <begin position="207"/>
        <end position="286"/>
    </location>
</feature>
<feature type="region of interest" description="G1" evidence="2">
    <location>
        <begin position="13"/>
        <end position="20"/>
    </location>
</feature>
<feature type="region of interest" description="G2" evidence="2">
    <location>
        <begin position="39"/>
        <end position="43"/>
    </location>
</feature>
<feature type="region of interest" description="G3" evidence="2">
    <location>
        <begin position="61"/>
        <end position="64"/>
    </location>
</feature>
<feature type="region of interest" description="G4" evidence="2">
    <location>
        <begin position="125"/>
        <end position="128"/>
    </location>
</feature>
<feature type="region of interest" description="G5" evidence="2">
    <location>
        <begin position="155"/>
        <end position="157"/>
    </location>
</feature>
<feature type="binding site" evidence="1">
    <location>
        <begin position="13"/>
        <end position="20"/>
    </location>
    <ligand>
        <name>GTP</name>
        <dbReference type="ChEBI" id="CHEBI:37565"/>
    </ligand>
</feature>
<feature type="binding site" evidence="1">
    <location>
        <begin position="61"/>
        <end position="65"/>
    </location>
    <ligand>
        <name>GTP</name>
        <dbReference type="ChEBI" id="CHEBI:37565"/>
    </ligand>
</feature>
<feature type="binding site" evidence="1">
    <location>
        <begin position="125"/>
        <end position="128"/>
    </location>
    <ligand>
        <name>GTP</name>
        <dbReference type="ChEBI" id="CHEBI:37565"/>
    </ligand>
</feature>